<dbReference type="EC" id="1.6.5.2" evidence="1"/>
<dbReference type="EMBL" id="CP000800">
    <property type="protein sequence ID" value="ABV17250.1"/>
    <property type="molecule type" value="Genomic_DNA"/>
</dbReference>
<dbReference type="SMR" id="A7ZSM7"/>
<dbReference type="KEGG" id="ecw:EcE24377A_3821"/>
<dbReference type="HOGENOM" id="CLU_058643_0_1_6"/>
<dbReference type="Proteomes" id="UP000001122">
    <property type="component" value="Chromosome"/>
</dbReference>
<dbReference type="GO" id="GO:0005886">
    <property type="term" value="C:plasma membrane"/>
    <property type="evidence" value="ECO:0007669"/>
    <property type="project" value="UniProtKB-SubCell"/>
</dbReference>
<dbReference type="GO" id="GO:0009055">
    <property type="term" value="F:electron transfer activity"/>
    <property type="evidence" value="ECO:0007669"/>
    <property type="project" value="TreeGrafter"/>
</dbReference>
<dbReference type="GO" id="GO:0010181">
    <property type="term" value="F:FMN binding"/>
    <property type="evidence" value="ECO:0007669"/>
    <property type="project" value="TreeGrafter"/>
</dbReference>
<dbReference type="GO" id="GO:0050136">
    <property type="term" value="F:NADH:ubiquinone reductase (non-electrogenic) activity"/>
    <property type="evidence" value="ECO:0007669"/>
    <property type="project" value="RHEA"/>
</dbReference>
<dbReference type="GO" id="GO:0008753">
    <property type="term" value="F:NADPH dehydrogenase (quinone) activity"/>
    <property type="evidence" value="ECO:0007669"/>
    <property type="project" value="RHEA"/>
</dbReference>
<dbReference type="GO" id="GO:1901381">
    <property type="term" value="P:positive regulation of potassium ion transmembrane transport"/>
    <property type="evidence" value="ECO:0007669"/>
    <property type="project" value="UniProtKB-UniRule"/>
</dbReference>
<dbReference type="GO" id="GO:0006813">
    <property type="term" value="P:potassium ion transport"/>
    <property type="evidence" value="ECO:0007669"/>
    <property type="project" value="InterPro"/>
</dbReference>
<dbReference type="FunFam" id="3.40.50.360:FF:000013">
    <property type="entry name" value="Glutathione-regulated potassium-efflux system ancillary protein KefG"/>
    <property type="match status" value="1"/>
</dbReference>
<dbReference type="Gene3D" id="3.40.50.360">
    <property type="match status" value="1"/>
</dbReference>
<dbReference type="HAMAP" id="MF_01415">
    <property type="entry name" value="K_H_efflux_KefG"/>
    <property type="match status" value="1"/>
</dbReference>
<dbReference type="InterPro" id="IPR003680">
    <property type="entry name" value="Flavodoxin_fold"/>
</dbReference>
<dbReference type="InterPro" id="IPR029039">
    <property type="entry name" value="Flavoprotein-like_sf"/>
</dbReference>
<dbReference type="InterPro" id="IPR023947">
    <property type="entry name" value="K_H_efflux_KefG"/>
</dbReference>
<dbReference type="InterPro" id="IPR046980">
    <property type="entry name" value="KefG/KefF"/>
</dbReference>
<dbReference type="NCBIfam" id="NF003430">
    <property type="entry name" value="PRK04930.1"/>
    <property type="match status" value="1"/>
</dbReference>
<dbReference type="PANTHER" id="PTHR47307">
    <property type="entry name" value="GLUTATHIONE-REGULATED POTASSIUM-EFFLUX SYSTEM ANCILLARY PROTEIN KEFG"/>
    <property type="match status" value="1"/>
</dbReference>
<dbReference type="PANTHER" id="PTHR47307:SF1">
    <property type="entry name" value="GLUTATHIONE-REGULATED POTASSIUM-EFFLUX SYSTEM ANCILLARY PROTEIN KEFG"/>
    <property type="match status" value="1"/>
</dbReference>
<dbReference type="Pfam" id="PF02525">
    <property type="entry name" value="Flavodoxin_2"/>
    <property type="match status" value="1"/>
</dbReference>
<dbReference type="SUPFAM" id="SSF52218">
    <property type="entry name" value="Flavoproteins"/>
    <property type="match status" value="1"/>
</dbReference>
<sequence>MMSQPAKVLLLYAHPESQDSVANRVLLKPATQLSNVTVHDLYAHYPDFFIDIPREQALLREHEVIVFQHPLYTYSCPALLKEWLDRVLSRGFASGPGGNQLAGKYWRSVITTGEPESAYRYDALNRYPMSDVLRPFELAAGMCRMHWLSPIIIYWARRQSAQELASHARAYGDWLANPLSPGGR</sequence>
<evidence type="ECO:0000255" key="1">
    <source>
        <dbReference type="HAMAP-Rule" id="MF_01415"/>
    </source>
</evidence>
<protein>
    <recommendedName>
        <fullName evidence="1">Glutathione-regulated potassium-efflux system ancillary protein KefG</fullName>
    </recommendedName>
    <alternativeName>
        <fullName evidence="1">Putative quinone oxidoreductase KefG</fullName>
        <ecNumber evidence="1">1.6.5.2</ecNumber>
    </alternativeName>
</protein>
<proteinExistence type="inferred from homology"/>
<comment type="function">
    <text evidence="1">Regulatory subunit of a potassium efflux system that confers protection against electrophiles. Required for full activity of KefB.</text>
</comment>
<comment type="catalytic activity">
    <reaction evidence="1">
        <text>a quinone + NADH + H(+) = a quinol + NAD(+)</text>
        <dbReference type="Rhea" id="RHEA:46160"/>
        <dbReference type="ChEBI" id="CHEBI:15378"/>
        <dbReference type="ChEBI" id="CHEBI:24646"/>
        <dbReference type="ChEBI" id="CHEBI:57540"/>
        <dbReference type="ChEBI" id="CHEBI:57945"/>
        <dbReference type="ChEBI" id="CHEBI:132124"/>
        <dbReference type="EC" id="1.6.5.2"/>
    </reaction>
</comment>
<comment type="catalytic activity">
    <reaction evidence="1">
        <text>a quinone + NADPH + H(+) = a quinol + NADP(+)</text>
        <dbReference type="Rhea" id="RHEA:46164"/>
        <dbReference type="ChEBI" id="CHEBI:15378"/>
        <dbReference type="ChEBI" id="CHEBI:24646"/>
        <dbReference type="ChEBI" id="CHEBI:57783"/>
        <dbReference type="ChEBI" id="CHEBI:58349"/>
        <dbReference type="ChEBI" id="CHEBI:132124"/>
        <dbReference type="EC" id="1.6.5.2"/>
    </reaction>
</comment>
<comment type="subunit">
    <text evidence="1">Interacts with KefB.</text>
</comment>
<comment type="subcellular location">
    <subcellularLocation>
        <location evidence="1">Cell inner membrane</location>
        <topology evidence="1">Peripheral membrane protein</topology>
        <orientation evidence="1">Cytoplasmic side</orientation>
    </subcellularLocation>
</comment>
<comment type="similarity">
    <text evidence="1">Belongs to the NAD(P)H dehydrogenase (quinone) family. KefG subfamily.</text>
</comment>
<name>KEFG_ECO24</name>
<organism>
    <name type="scientific">Escherichia coli O139:H28 (strain E24377A / ETEC)</name>
    <dbReference type="NCBI Taxonomy" id="331111"/>
    <lineage>
        <taxon>Bacteria</taxon>
        <taxon>Pseudomonadati</taxon>
        <taxon>Pseudomonadota</taxon>
        <taxon>Gammaproteobacteria</taxon>
        <taxon>Enterobacterales</taxon>
        <taxon>Enterobacteriaceae</taxon>
        <taxon>Escherichia</taxon>
    </lineage>
</organism>
<keyword id="KW-0997">Cell inner membrane</keyword>
<keyword id="KW-1003">Cell membrane</keyword>
<keyword id="KW-0472">Membrane</keyword>
<keyword id="KW-0520">NAD</keyword>
<keyword id="KW-0560">Oxidoreductase</keyword>
<keyword id="KW-1185">Reference proteome</keyword>
<gene>
    <name evidence="1" type="primary">kefG</name>
    <name type="ordered locus">EcE24377A_3821</name>
</gene>
<feature type="chain" id="PRO_1000068475" description="Glutathione-regulated potassium-efflux system ancillary protein KefG">
    <location>
        <begin position="1"/>
        <end position="184"/>
    </location>
</feature>
<accession>A7ZSM7</accession>
<reference key="1">
    <citation type="journal article" date="2008" name="J. Bacteriol.">
        <title>The pangenome structure of Escherichia coli: comparative genomic analysis of E. coli commensal and pathogenic isolates.</title>
        <authorList>
            <person name="Rasko D.A."/>
            <person name="Rosovitz M.J."/>
            <person name="Myers G.S.A."/>
            <person name="Mongodin E.F."/>
            <person name="Fricke W.F."/>
            <person name="Gajer P."/>
            <person name="Crabtree J."/>
            <person name="Sebaihia M."/>
            <person name="Thomson N.R."/>
            <person name="Chaudhuri R."/>
            <person name="Henderson I.R."/>
            <person name="Sperandio V."/>
            <person name="Ravel J."/>
        </authorList>
    </citation>
    <scope>NUCLEOTIDE SEQUENCE [LARGE SCALE GENOMIC DNA]</scope>
    <source>
        <strain>E24377A / ETEC</strain>
    </source>
</reference>